<feature type="chain" id="PRO_0000204034" description="Rhizobactin siderophore biosynthesis protein RhbE">
    <location>
        <begin position="1"/>
        <end position="454"/>
    </location>
</feature>
<feature type="binding site" evidence="2">
    <location>
        <begin position="7"/>
        <end position="13"/>
    </location>
    <ligand>
        <name>FAD</name>
        <dbReference type="ChEBI" id="CHEBI:57692"/>
    </ligand>
</feature>
<organism>
    <name type="scientific">Rhizobium meliloti (strain 1021)</name>
    <name type="common">Ensifer meliloti</name>
    <name type="synonym">Sinorhizobium meliloti</name>
    <dbReference type="NCBI Taxonomy" id="266834"/>
    <lineage>
        <taxon>Bacteria</taxon>
        <taxon>Pseudomonadati</taxon>
        <taxon>Pseudomonadota</taxon>
        <taxon>Alphaproteobacteria</taxon>
        <taxon>Hyphomicrobiales</taxon>
        <taxon>Rhizobiaceae</taxon>
        <taxon>Sinorhizobium/Ensifer group</taxon>
        <taxon>Sinorhizobium</taxon>
    </lineage>
</organism>
<comment type="cofactor">
    <cofactor evidence="1">
        <name>FAD</name>
        <dbReference type="ChEBI" id="CHEBI:57692"/>
    </cofactor>
</comment>
<comment type="pathway">
    <text>Siderophore biosynthesis; rhizobactin biosynthesis.</text>
</comment>
<comment type="similarity">
    <text evidence="3">Belongs to the lysine N(6)-hydroxylase/L-ornithine N(5)-oxygenase family.</text>
</comment>
<comment type="sequence caution" evidence="3">
    <conflict type="erroneous initiation">
        <sequence resource="EMBL-CDS" id="AAK65920"/>
    </conflict>
</comment>
<sequence>MTDFDLAGIGIGPFNLGLAALLSSHENLSNVFLERKPAFRWHEGLILPGTTLQVPFMADLVTMADPTHRLSFLNYLAVHDRLYKFYFYENFMIPRQEYDHYCRWASQQLSACRFGEEVVDVAHESASDSFIVESRSASGGKQQYRSRNIAIGVGTAPFLPKWAQIKTLAPLMHSSEFGRRRLELSKRRRVTVIGSGQSAAECVLALLNDLTPEMVAAGASIQWITRSAGFFPMEYSKLGLEYFTPDYMRHFHRIAPVRRREIVADQGLLYKGISFSTIGEIFDLMYERSVGGRDPGLALFSNCAVETLESAGGSGSFRIGINHNHLDEKATVETDAIVAATGYRHAWPEWLGSLKGSVLDTCEWGDLVVGGDFRARRSDGGKGHVFVQNAETFHHGVGAPDLGLGAFRNAVIVNQLLGREHYRVNASASFQKFGLPSSQTAPSSISGDFYAHAS</sequence>
<keyword id="KW-0274">FAD</keyword>
<keyword id="KW-0285">Flavoprotein</keyword>
<keyword id="KW-0521">NADP</keyword>
<keyword id="KW-0560">Oxidoreductase</keyword>
<keyword id="KW-0614">Plasmid</keyword>
<keyword id="KW-1185">Reference proteome</keyword>
<dbReference type="EC" id="1.-.-.-"/>
<dbReference type="EMBL" id="AF110737">
    <property type="protein sequence ID" value="AAD09416.1"/>
    <property type="molecule type" value="Genomic_DNA"/>
</dbReference>
<dbReference type="EMBL" id="AE006469">
    <property type="protein sequence ID" value="AAK65920.1"/>
    <property type="status" value="ALT_INIT"/>
    <property type="molecule type" value="Genomic_DNA"/>
</dbReference>
<dbReference type="PIR" id="F95419">
    <property type="entry name" value="F95419"/>
</dbReference>
<dbReference type="PIR" id="T46818">
    <property type="entry name" value="T46818"/>
</dbReference>
<dbReference type="RefSeq" id="NP_436508.1">
    <property type="nucleotide sequence ID" value="NC_003037.1"/>
</dbReference>
<dbReference type="SMR" id="Q9Z3Q8"/>
<dbReference type="EnsemblBacteria" id="AAK65920">
    <property type="protein sequence ID" value="AAK65920"/>
    <property type="gene ID" value="SMa2408"/>
</dbReference>
<dbReference type="KEGG" id="sme:SMa2408"/>
<dbReference type="PATRIC" id="fig|266834.11.peg.1315"/>
<dbReference type="HOGENOM" id="CLU_020931_0_0_5"/>
<dbReference type="OrthoDB" id="7527071at2"/>
<dbReference type="BioCyc" id="MetaCyc:MONOMER-15540"/>
<dbReference type="UniPathway" id="UPA00020"/>
<dbReference type="Proteomes" id="UP000001976">
    <property type="component" value="Plasmid pSymA"/>
</dbReference>
<dbReference type="GO" id="GO:0016491">
    <property type="term" value="F:oxidoreductase activity"/>
    <property type="evidence" value="ECO:0007669"/>
    <property type="project" value="UniProtKB-KW"/>
</dbReference>
<dbReference type="GO" id="GO:0019289">
    <property type="term" value="P:rhizobactin 1021 biosynthetic process"/>
    <property type="evidence" value="ECO:0007669"/>
    <property type="project" value="UniProtKB-UniPathway"/>
</dbReference>
<dbReference type="Gene3D" id="3.50.50.60">
    <property type="entry name" value="FAD/NAD(P)-binding domain"/>
    <property type="match status" value="1"/>
</dbReference>
<dbReference type="InterPro" id="IPR036188">
    <property type="entry name" value="FAD/NAD-bd_sf"/>
</dbReference>
<dbReference type="InterPro" id="IPR031043">
    <property type="entry name" value="Histamin_N_OH"/>
</dbReference>
<dbReference type="InterPro" id="IPR025700">
    <property type="entry name" value="Lys/Orn_oxygenase"/>
</dbReference>
<dbReference type="NCBIfam" id="TIGR04439">
    <property type="entry name" value="histamin_N_OH"/>
    <property type="match status" value="1"/>
</dbReference>
<dbReference type="PANTHER" id="PTHR42802:SF1">
    <property type="entry name" value="L-ORNITHINE N(5)-MONOOXYGENASE"/>
    <property type="match status" value="1"/>
</dbReference>
<dbReference type="PANTHER" id="PTHR42802">
    <property type="entry name" value="MONOOXYGENASE"/>
    <property type="match status" value="1"/>
</dbReference>
<dbReference type="Pfam" id="PF13434">
    <property type="entry name" value="Lys_Orn_oxgnase"/>
    <property type="match status" value="1"/>
</dbReference>
<dbReference type="SUPFAM" id="SSF51905">
    <property type="entry name" value="FAD/NAD(P)-binding domain"/>
    <property type="match status" value="1"/>
</dbReference>
<protein>
    <recommendedName>
        <fullName>Rhizobactin siderophore biosynthesis protein RhbE</fullName>
        <ecNumber>1.-.-.-</ecNumber>
    </recommendedName>
</protein>
<reference key="1">
    <citation type="journal article" date="2001" name="J. Bacteriol.">
        <title>Genetic organization of the region encoding regulation, biosynthesis, and transport of rhizobactin 1021, a siderophore produced by Sinorhizobium meliloti.</title>
        <authorList>
            <person name="Lynch D."/>
            <person name="O'Brien J."/>
            <person name="Welch T."/>
            <person name="Clarke P."/>
            <person name="Cuiv P.O."/>
            <person name="Crosa J.H."/>
            <person name="O'Connell M."/>
        </authorList>
    </citation>
    <scope>NUCLEOTIDE SEQUENCE [GENOMIC DNA]</scope>
    <source>
        <strain>RCR2011 / SU47</strain>
    </source>
</reference>
<reference key="2">
    <citation type="journal article" date="2001" name="Proc. Natl. Acad. Sci. U.S.A.">
        <title>Nucleotide sequence and predicted functions of the entire Sinorhizobium meliloti pSymA megaplasmid.</title>
        <authorList>
            <person name="Barnett M.J."/>
            <person name="Fisher R.F."/>
            <person name="Jones T."/>
            <person name="Komp C."/>
            <person name="Abola A.P."/>
            <person name="Barloy-Hubler F."/>
            <person name="Bowser L."/>
            <person name="Capela D."/>
            <person name="Galibert F."/>
            <person name="Gouzy J."/>
            <person name="Gurjal M."/>
            <person name="Hong A."/>
            <person name="Huizar L."/>
            <person name="Hyman R.W."/>
            <person name="Kahn D."/>
            <person name="Kahn M.L."/>
            <person name="Kalman S."/>
            <person name="Keating D.H."/>
            <person name="Palm C."/>
            <person name="Peck M.C."/>
            <person name="Surzycki R."/>
            <person name="Wells D.H."/>
            <person name="Yeh K.-C."/>
            <person name="Davis R.W."/>
            <person name="Federspiel N.A."/>
            <person name="Long S.R."/>
        </authorList>
    </citation>
    <scope>NUCLEOTIDE SEQUENCE [LARGE SCALE GENOMIC DNA]</scope>
    <source>
        <strain>1021</strain>
    </source>
</reference>
<reference key="3">
    <citation type="journal article" date="2001" name="Science">
        <title>The composite genome of the legume symbiont Sinorhizobium meliloti.</title>
        <authorList>
            <person name="Galibert F."/>
            <person name="Finan T.M."/>
            <person name="Long S.R."/>
            <person name="Puehler A."/>
            <person name="Abola P."/>
            <person name="Ampe F."/>
            <person name="Barloy-Hubler F."/>
            <person name="Barnett M.J."/>
            <person name="Becker A."/>
            <person name="Boistard P."/>
            <person name="Bothe G."/>
            <person name="Boutry M."/>
            <person name="Bowser L."/>
            <person name="Buhrmester J."/>
            <person name="Cadieu E."/>
            <person name="Capela D."/>
            <person name="Chain P."/>
            <person name="Cowie A."/>
            <person name="Davis R.W."/>
            <person name="Dreano S."/>
            <person name="Federspiel N.A."/>
            <person name="Fisher R.F."/>
            <person name="Gloux S."/>
            <person name="Godrie T."/>
            <person name="Goffeau A."/>
            <person name="Golding B."/>
            <person name="Gouzy J."/>
            <person name="Gurjal M."/>
            <person name="Hernandez-Lucas I."/>
            <person name="Hong A."/>
            <person name="Huizar L."/>
            <person name="Hyman R.W."/>
            <person name="Jones T."/>
            <person name="Kahn D."/>
            <person name="Kahn M.L."/>
            <person name="Kalman S."/>
            <person name="Keating D.H."/>
            <person name="Kiss E."/>
            <person name="Komp C."/>
            <person name="Lelaure V."/>
            <person name="Masuy D."/>
            <person name="Palm C."/>
            <person name="Peck M.C."/>
            <person name="Pohl T.M."/>
            <person name="Portetelle D."/>
            <person name="Purnelle B."/>
            <person name="Ramsperger U."/>
            <person name="Surzycki R."/>
            <person name="Thebault P."/>
            <person name="Vandenbol M."/>
            <person name="Vorhoelter F.J."/>
            <person name="Weidner S."/>
            <person name="Wells D.H."/>
            <person name="Wong K."/>
            <person name="Yeh K.-C."/>
            <person name="Batut J."/>
        </authorList>
    </citation>
    <scope>NUCLEOTIDE SEQUENCE [LARGE SCALE GENOMIC DNA]</scope>
    <source>
        <strain>1021</strain>
    </source>
</reference>
<name>RHBE_RHIME</name>
<evidence type="ECO:0000250" key="1"/>
<evidence type="ECO:0000255" key="2"/>
<evidence type="ECO:0000305" key="3"/>
<geneLocation type="plasmid">
    <name>pSymA</name>
    <name>megaplasmid 1</name>
</geneLocation>
<proteinExistence type="inferred from homology"/>
<accession>Q9Z3Q8</accession>
<gene>
    <name type="primary">rhbE</name>
    <name type="synonym">rhsE</name>
    <name type="ordered locus">RA1262</name>
    <name type="ORF">SMa2408</name>
</gene>